<accession>A6QLJ8</accession>
<gene>
    <name type="primary">PTER</name>
</gene>
<proteinExistence type="evidence at transcript level"/>
<comment type="function">
    <text evidence="2">N-acetyltaurine hydrolase that regulates feeding by catalyzing the hydrolysis of N-acetyltaurine into taurine and acetate. N-acetyltaurine has anorexigenic and anti-obesity effects that are dependent on GFRAL receptor and GDF15. PTER also acts on other N-acetyl amino acids (Met, Ile, Leu, Val) and N-propionyltaurine, but at lower rates.</text>
</comment>
<comment type="catalytic activity">
    <reaction evidence="2">
        <text>N-acetyltaurine + H2O = taurine + acetate</text>
        <dbReference type="Rhea" id="RHEA:81107"/>
        <dbReference type="ChEBI" id="CHEBI:15377"/>
        <dbReference type="ChEBI" id="CHEBI:30089"/>
        <dbReference type="ChEBI" id="CHEBI:133737"/>
        <dbReference type="ChEBI" id="CHEBI:507393"/>
    </reaction>
    <physiologicalReaction direction="left-to-right" evidence="2">
        <dbReference type="Rhea" id="RHEA:81108"/>
    </physiologicalReaction>
</comment>
<comment type="catalytic activity">
    <reaction evidence="2">
        <text>N-propanoyltaurine + H2O = propanoate + taurine</text>
        <dbReference type="Rhea" id="RHEA:81111"/>
        <dbReference type="ChEBI" id="CHEBI:15377"/>
        <dbReference type="ChEBI" id="CHEBI:17272"/>
        <dbReference type="ChEBI" id="CHEBI:231795"/>
        <dbReference type="ChEBI" id="CHEBI:507393"/>
    </reaction>
    <physiologicalReaction direction="left-to-right" evidence="2">
        <dbReference type="Rhea" id="RHEA:81112"/>
    </physiologicalReaction>
</comment>
<comment type="catalytic activity">
    <reaction evidence="2">
        <text>N-acetyl-L-methionine + H2O = L-methionine + acetate</text>
        <dbReference type="Rhea" id="RHEA:67440"/>
        <dbReference type="ChEBI" id="CHEBI:15377"/>
        <dbReference type="ChEBI" id="CHEBI:30089"/>
        <dbReference type="ChEBI" id="CHEBI:57844"/>
        <dbReference type="ChEBI" id="CHEBI:71670"/>
    </reaction>
    <physiologicalReaction direction="left-to-right" evidence="2">
        <dbReference type="Rhea" id="RHEA:67441"/>
    </physiologicalReaction>
</comment>
<comment type="catalytic activity">
    <reaction evidence="2">
        <text>N-acetyl-L-isoleucine + H2O = L-isoleucine + acetate</text>
        <dbReference type="Rhea" id="RHEA:81119"/>
        <dbReference type="ChEBI" id="CHEBI:15377"/>
        <dbReference type="ChEBI" id="CHEBI:30089"/>
        <dbReference type="ChEBI" id="CHEBI:58045"/>
        <dbReference type="ChEBI" id="CHEBI:133735"/>
    </reaction>
    <physiologicalReaction direction="left-to-right" evidence="2">
        <dbReference type="Rhea" id="RHEA:81120"/>
    </physiologicalReaction>
</comment>
<comment type="catalytic activity">
    <reaction evidence="2">
        <text>N-acetyl-L-leucine + H2O = L-leucine + acetate</text>
        <dbReference type="Rhea" id="RHEA:81115"/>
        <dbReference type="ChEBI" id="CHEBI:15377"/>
        <dbReference type="ChEBI" id="CHEBI:30089"/>
        <dbReference type="ChEBI" id="CHEBI:57427"/>
        <dbReference type="ChEBI" id="CHEBI:58270"/>
    </reaction>
    <physiologicalReaction direction="left-to-right" evidence="2">
        <dbReference type="Rhea" id="RHEA:81116"/>
    </physiologicalReaction>
</comment>
<comment type="catalytic activity">
    <reaction evidence="2">
        <text>N-acetyl-L-valine + H2O = L-valine + acetate</text>
        <dbReference type="Rhea" id="RHEA:81123"/>
        <dbReference type="ChEBI" id="CHEBI:15377"/>
        <dbReference type="ChEBI" id="CHEBI:30089"/>
        <dbReference type="ChEBI" id="CHEBI:57762"/>
        <dbReference type="ChEBI" id="CHEBI:133716"/>
    </reaction>
    <physiologicalReaction direction="left-to-right" evidence="2">
        <dbReference type="Rhea" id="RHEA:81124"/>
    </physiologicalReaction>
</comment>
<comment type="cofactor">
    <cofactor evidence="1">
        <name>a divalent metal cation</name>
        <dbReference type="ChEBI" id="CHEBI:60240"/>
    </cofactor>
    <text evidence="1">Binds 2 divalent metal cations per subunit.</text>
</comment>
<comment type="subcellular location">
    <subcellularLocation>
        <location evidence="2">Cytoplasm</location>
        <location evidence="2">Cytosol</location>
    </subcellularLocation>
</comment>
<comment type="similarity">
    <text evidence="3">Belongs to the metallo-dependent hydrolases superfamily. Phosphotriesterase family.</text>
</comment>
<feature type="chain" id="PRO_0000388665" description="N-acetyltaurine hydrolase">
    <location>
        <begin position="1"/>
        <end position="349"/>
    </location>
</feature>
<feature type="binding site" evidence="1">
    <location>
        <position position="26"/>
    </location>
    <ligand>
        <name>a divalent metal cation</name>
        <dbReference type="ChEBI" id="CHEBI:60240"/>
        <label>1</label>
    </ligand>
</feature>
<feature type="binding site" evidence="1">
    <location>
        <position position="28"/>
    </location>
    <ligand>
        <name>a divalent metal cation</name>
        <dbReference type="ChEBI" id="CHEBI:60240"/>
        <label>1</label>
    </ligand>
</feature>
<feature type="binding site" evidence="1">
    <location>
        <position position="169"/>
    </location>
    <ligand>
        <name>a divalent metal cation</name>
        <dbReference type="ChEBI" id="CHEBI:60240"/>
        <label>1</label>
    </ligand>
</feature>
<feature type="binding site" evidence="1">
    <location>
        <position position="169"/>
    </location>
    <ligand>
        <name>a divalent metal cation</name>
        <dbReference type="ChEBI" id="CHEBI:60240"/>
        <label>2</label>
    </ligand>
</feature>
<feature type="binding site" evidence="1">
    <location>
        <position position="201"/>
    </location>
    <ligand>
        <name>a divalent metal cation</name>
        <dbReference type="ChEBI" id="CHEBI:60240"/>
        <label>2</label>
    </ligand>
</feature>
<feature type="binding site" evidence="1">
    <location>
        <position position="230"/>
    </location>
    <ligand>
        <name>a divalent metal cation</name>
        <dbReference type="ChEBI" id="CHEBI:60240"/>
        <label>2</label>
    </ligand>
</feature>
<feature type="binding site" evidence="1">
    <location>
        <position position="298"/>
    </location>
    <ligand>
        <name>a divalent metal cation</name>
        <dbReference type="ChEBI" id="CHEBI:60240"/>
        <label>1</label>
    </ligand>
</feature>
<sequence length="349" mass="39098">MSSLSGKVQTVLGLVEPGTLGRTLTHEHLTMTFDCCYYPPPPSHEAISKEPIIMKNLFWIQKNPYSHKENLQLNQETEAIKEELLDFKAKGGGALVENTTTGLSRDVRTLKWLAEETGVHIIAGAGFYVDATHSSETRAKSVEQLTDVLVNEILCGADGTSIKCGVIGEIGCSWPLTDSERKVLQATAHAQTQLGCPVIIHPGRNQSAPFQIIRVLQEAGGDISKTVMSHIDRTILDKKELLEFAQFGCYLEYDLFGTELFHYQFNPDIDMPNDNKRIKRVRLLVDEGYEDRILMAHDIHTKNRLTKYGGHGYSHILTNIVPKMLLRGITEGALDKILIENPKQWLTFK</sequence>
<organism>
    <name type="scientific">Bos taurus</name>
    <name type="common">Bovine</name>
    <dbReference type="NCBI Taxonomy" id="9913"/>
    <lineage>
        <taxon>Eukaryota</taxon>
        <taxon>Metazoa</taxon>
        <taxon>Chordata</taxon>
        <taxon>Craniata</taxon>
        <taxon>Vertebrata</taxon>
        <taxon>Euteleostomi</taxon>
        <taxon>Mammalia</taxon>
        <taxon>Eutheria</taxon>
        <taxon>Laurasiatheria</taxon>
        <taxon>Artiodactyla</taxon>
        <taxon>Ruminantia</taxon>
        <taxon>Pecora</taxon>
        <taxon>Bovidae</taxon>
        <taxon>Bovinae</taxon>
        <taxon>Bos</taxon>
    </lineage>
</organism>
<evidence type="ECO:0000250" key="1">
    <source>
        <dbReference type="UniProtKB" id="P45548"/>
    </source>
</evidence>
<evidence type="ECO:0000250" key="2">
    <source>
        <dbReference type="UniProtKB" id="Q60866"/>
    </source>
</evidence>
<evidence type="ECO:0000255" key="3">
    <source>
        <dbReference type="PROSITE-ProRule" id="PRU00679"/>
    </source>
</evidence>
<evidence type="ECO:0000305" key="4"/>
<dbReference type="EC" id="3.1.-.-" evidence="2"/>
<dbReference type="EMBL" id="BC147990">
    <property type="protein sequence ID" value="AAI47991.1"/>
    <property type="molecule type" value="mRNA"/>
</dbReference>
<dbReference type="RefSeq" id="NP_001094752.1">
    <property type="nucleotide sequence ID" value="NM_001101282.1"/>
</dbReference>
<dbReference type="RefSeq" id="XP_005214341.1">
    <property type="nucleotide sequence ID" value="XM_005214284.4"/>
</dbReference>
<dbReference type="RefSeq" id="XP_005214342.1">
    <property type="nucleotide sequence ID" value="XM_005214285.5"/>
</dbReference>
<dbReference type="SMR" id="A6QLJ8"/>
<dbReference type="FunCoup" id="A6QLJ8">
    <property type="interactions" value="181"/>
</dbReference>
<dbReference type="STRING" id="9913.ENSBTAP00000061794"/>
<dbReference type="PaxDb" id="9913-ENSBTAP00000022174"/>
<dbReference type="Ensembl" id="ENSBTAT00000022174.5">
    <property type="protein sequence ID" value="ENSBTAP00000022174.4"/>
    <property type="gene ID" value="ENSBTAG00000016676.6"/>
</dbReference>
<dbReference type="GeneID" id="782020"/>
<dbReference type="KEGG" id="bta:782020"/>
<dbReference type="CTD" id="9317"/>
<dbReference type="VEuPathDB" id="HostDB:ENSBTAG00000016676"/>
<dbReference type="VGNC" id="VGNC:33497">
    <property type="gene designation" value="PTER"/>
</dbReference>
<dbReference type="eggNOG" id="ENOG502QQQR">
    <property type="taxonomic scope" value="Eukaryota"/>
</dbReference>
<dbReference type="GeneTree" id="ENSGT00390000006960"/>
<dbReference type="HOGENOM" id="CLU_054760_0_1_1"/>
<dbReference type="InParanoid" id="A6QLJ8"/>
<dbReference type="OMA" id="MVKCGFI"/>
<dbReference type="OrthoDB" id="9998343at2759"/>
<dbReference type="TreeFam" id="TF323205"/>
<dbReference type="Proteomes" id="UP000009136">
    <property type="component" value="Chromosome 13"/>
</dbReference>
<dbReference type="Bgee" id="ENSBTAG00000016676">
    <property type="expression patterns" value="Expressed in metanephros cortex and 105 other cell types or tissues"/>
</dbReference>
<dbReference type="GO" id="GO:0005829">
    <property type="term" value="C:cytosol"/>
    <property type="evidence" value="ECO:0000250"/>
    <property type="project" value="UniProtKB"/>
</dbReference>
<dbReference type="GO" id="GO:0141215">
    <property type="term" value="F:N-acetyltaurine hydrolase activity"/>
    <property type="evidence" value="ECO:0000250"/>
    <property type="project" value="UniProtKB"/>
</dbReference>
<dbReference type="GO" id="GO:0008270">
    <property type="term" value="F:zinc ion binding"/>
    <property type="evidence" value="ECO:0007669"/>
    <property type="project" value="InterPro"/>
</dbReference>
<dbReference type="GO" id="GO:0009056">
    <property type="term" value="P:catabolic process"/>
    <property type="evidence" value="ECO:0007669"/>
    <property type="project" value="InterPro"/>
</dbReference>
<dbReference type="GO" id="GO:0030855">
    <property type="term" value="P:epithelial cell differentiation"/>
    <property type="evidence" value="ECO:0007669"/>
    <property type="project" value="Ensembl"/>
</dbReference>
<dbReference type="GO" id="GO:0032098">
    <property type="term" value="P:regulation of appetite"/>
    <property type="evidence" value="ECO:0000250"/>
    <property type="project" value="UniProtKB"/>
</dbReference>
<dbReference type="GO" id="GO:0019530">
    <property type="term" value="P:taurine metabolic process"/>
    <property type="evidence" value="ECO:0000250"/>
    <property type="project" value="UniProtKB"/>
</dbReference>
<dbReference type="CDD" id="cd00530">
    <property type="entry name" value="PTE"/>
    <property type="match status" value="1"/>
</dbReference>
<dbReference type="Gene3D" id="3.20.20.140">
    <property type="entry name" value="Metal-dependent hydrolases"/>
    <property type="match status" value="1"/>
</dbReference>
<dbReference type="InterPro" id="IPR017947">
    <property type="entry name" value="AryldialkylPase_Zn-BS"/>
</dbReference>
<dbReference type="InterPro" id="IPR032466">
    <property type="entry name" value="Metal_Hydrolase"/>
</dbReference>
<dbReference type="InterPro" id="IPR001559">
    <property type="entry name" value="Phosphotriesterase"/>
</dbReference>
<dbReference type="PANTHER" id="PTHR10819">
    <property type="entry name" value="PHOSPHOTRIESTERASE-RELATED"/>
    <property type="match status" value="1"/>
</dbReference>
<dbReference type="PANTHER" id="PTHR10819:SF3">
    <property type="entry name" value="PHOSPHOTRIESTERASE-RELATED PROTEIN"/>
    <property type="match status" value="1"/>
</dbReference>
<dbReference type="Pfam" id="PF02126">
    <property type="entry name" value="PTE"/>
    <property type="match status" value="1"/>
</dbReference>
<dbReference type="SUPFAM" id="SSF51556">
    <property type="entry name" value="Metallo-dependent hydrolases"/>
    <property type="match status" value="1"/>
</dbReference>
<dbReference type="PROSITE" id="PS01322">
    <property type="entry name" value="PHOSPHOTRIESTERASE_1"/>
    <property type="match status" value="1"/>
</dbReference>
<dbReference type="PROSITE" id="PS51347">
    <property type="entry name" value="PHOSPHOTRIESTERASE_2"/>
    <property type="match status" value="1"/>
</dbReference>
<protein>
    <recommendedName>
        <fullName evidence="4">N-acetyltaurine hydrolase</fullName>
        <ecNumber evidence="2">3.1.-.-</ecNumber>
    </recommendedName>
    <alternativeName>
        <fullName evidence="2">Phosphotriesterase-related protein</fullName>
    </alternativeName>
</protein>
<keyword id="KW-0963">Cytoplasm</keyword>
<keyword id="KW-0378">Hydrolase</keyword>
<keyword id="KW-0479">Metal-binding</keyword>
<keyword id="KW-1185">Reference proteome</keyword>
<name>PTER_BOVIN</name>
<reference key="1">
    <citation type="submission" date="2007-06" db="EMBL/GenBank/DDBJ databases">
        <authorList>
            <consortium name="NIH - Mammalian Gene Collection (MGC) project"/>
        </authorList>
    </citation>
    <scope>NUCLEOTIDE SEQUENCE [LARGE SCALE MRNA]</scope>
    <source>
        <strain>Hereford</strain>
        <tissue>Ascending colon</tissue>
    </source>
</reference>